<organism>
    <name type="scientific">Drosophila melanogaster</name>
    <name type="common">Fruit fly</name>
    <dbReference type="NCBI Taxonomy" id="7227"/>
    <lineage>
        <taxon>Eukaryota</taxon>
        <taxon>Metazoa</taxon>
        <taxon>Ecdysozoa</taxon>
        <taxon>Arthropoda</taxon>
        <taxon>Hexapoda</taxon>
        <taxon>Insecta</taxon>
        <taxon>Pterygota</taxon>
        <taxon>Neoptera</taxon>
        <taxon>Endopterygota</taxon>
        <taxon>Diptera</taxon>
        <taxon>Brachycera</taxon>
        <taxon>Muscomorpha</taxon>
        <taxon>Ephydroidea</taxon>
        <taxon>Drosophilidae</taxon>
        <taxon>Drosophila</taxon>
        <taxon>Sophophora</taxon>
    </lineage>
</organism>
<protein>
    <recommendedName>
        <fullName>DNA-directed RNA polymerase I subunit RPA2</fullName>
        <shortName>RNA polymerase I subunit 2</shortName>
        <ecNumber evidence="1">2.7.7.6</ecNumber>
    </recommendedName>
    <alternativeName>
        <fullName evidence="6">RNA polymerase I subunit B</fullName>
    </alternativeName>
    <alternativeName>
        <fullName>RPA135</fullName>
    </alternativeName>
</protein>
<keyword id="KW-0240">DNA-directed RNA polymerase</keyword>
<keyword id="KW-0479">Metal-binding</keyword>
<keyword id="KW-0548">Nucleotidyltransferase</keyword>
<keyword id="KW-0539">Nucleus</keyword>
<keyword id="KW-1185">Reference proteome</keyword>
<keyword id="KW-0804">Transcription</keyword>
<keyword id="KW-0808">Transferase</keyword>
<keyword id="KW-0862">Zinc</keyword>
<keyword id="KW-0863">Zinc-finger</keyword>
<dbReference type="EC" id="2.7.7.6" evidence="1"/>
<dbReference type="EMBL" id="X17298">
    <property type="protein sequence ID" value="CAA35185.1"/>
    <property type="molecule type" value="Genomic_DNA"/>
</dbReference>
<dbReference type="EMBL" id="AE014134">
    <property type="protein sequence ID" value="AAF51503.1"/>
    <property type="molecule type" value="Genomic_DNA"/>
</dbReference>
<dbReference type="EMBL" id="AY075569">
    <property type="protein sequence ID" value="AAL68376.1"/>
    <property type="molecule type" value="mRNA"/>
</dbReference>
<dbReference type="PIR" id="JQ0354">
    <property type="entry name" value="JQ0354"/>
</dbReference>
<dbReference type="RefSeq" id="NP_476708.1">
    <property type="nucleotide sequence ID" value="NM_057360.4"/>
</dbReference>
<dbReference type="SMR" id="P20028"/>
<dbReference type="BioGRID" id="59466">
    <property type="interactions" value="9"/>
</dbReference>
<dbReference type="ComplexPortal" id="CPX-2602">
    <property type="entry name" value="DNA-directed RNA polymerase I complex"/>
</dbReference>
<dbReference type="DIP" id="DIP-61427N"/>
<dbReference type="FunCoup" id="P20028">
    <property type="interactions" value="1096"/>
</dbReference>
<dbReference type="IntAct" id="P20028">
    <property type="interactions" value="13"/>
</dbReference>
<dbReference type="STRING" id="7227.FBpp0077714"/>
<dbReference type="GlyGen" id="P20028">
    <property type="glycosylation" value="1 site"/>
</dbReference>
<dbReference type="PaxDb" id="7227-FBpp0077714"/>
<dbReference type="DNASU" id="33210"/>
<dbReference type="EnsemblMetazoa" id="FBtr0078054">
    <property type="protein sequence ID" value="FBpp0077714"/>
    <property type="gene ID" value="FBgn0003278"/>
</dbReference>
<dbReference type="GeneID" id="33210"/>
<dbReference type="KEGG" id="dme:Dmel_CG4033"/>
<dbReference type="AGR" id="FB:FBgn0003278"/>
<dbReference type="CTD" id="84172"/>
<dbReference type="FlyBase" id="FBgn0003278">
    <property type="gene designation" value="Polr1B"/>
</dbReference>
<dbReference type="VEuPathDB" id="VectorBase:FBgn0003278"/>
<dbReference type="eggNOG" id="KOG0216">
    <property type="taxonomic scope" value="Eukaryota"/>
</dbReference>
<dbReference type="GeneTree" id="ENSGT00950000183132"/>
<dbReference type="HOGENOM" id="CLU_000524_5_1_1"/>
<dbReference type="InParanoid" id="P20028"/>
<dbReference type="OMA" id="FFGVVHY"/>
<dbReference type="OrthoDB" id="10248617at2759"/>
<dbReference type="PhylomeDB" id="P20028"/>
<dbReference type="Reactome" id="R-DME-73762">
    <property type="pathway name" value="RNA Polymerase I Transcription Initiation"/>
</dbReference>
<dbReference type="Reactome" id="R-DME-73772">
    <property type="pathway name" value="RNA Polymerase I Promoter Escape"/>
</dbReference>
<dbReference type="SignaLink" id="P20028"/>
<dbReference type="BioGRID-ORCS" id="33210">
    <property type="hits" value="0 hits in 1 CRISPR screen"/>
</dbReference>
<dbReference type="CD-CODE" id="34A76419">
    <property type="entry name" value="Nucleolus"/>
</dbReference>
<dbReference type="GenomeRNAi" id="33210"/>
<dbReference type="PRO" id="PR:P20028"/>
<dbReference type="Proteomes" id="UP000000803">
    <property type="component" value="Chromosome 2L"/>
</dbReference>
<dbReference type="Bgee" id="FBgn0003278">
    <property type="expression patterns" value="Expressed in eye disc (Drosophila) and 45 other cell types or tissues"/>
</dbReference>
<dbReference type="GO" id="GO:0005739">
    <property type="term" value="C:mitochondrion"/>
    <property type="evidence" value="ECO:0007669"/>
    <property type="project" value="GOC"/>
</dbReference>
<dbReference type="GO" id="GO:0005736">
    <property type="term" value="C:RNA polymerase I complex"/>
    <property type="evidence" value="ECO:0000250"/>
    <property type="project" value="FlyBase"/>
</dbReference>
<dbReference type="GO" id="GO:0003677">
    <property type="term" value="F:DNA binding"/>
    <property type="evidence" value="ECO:0007669"/>
    <property type="project" value="InterPro"/>
</dbReference>
<dbReference type="GO" id="GO:0003899">
    <property type="term" value="F:DNA-directed RNA polymerase activity"/>
    <property type="evidence" value="ECO:0007669"/>
    <property type="project" value="UniProtKB-EC"/>
</dbReference>
<dbReference type="GO" id="GO:0032549">
    <property type="term" value="F:ribonucleoside binding"/>
    <property type="evidence" value="ECO:0007669"/>
    <property type="project" value="InterPro"/>
</dbReference>
<dbReference type="GO" id="GO:0008270">
    <property type="term" value="F:zinc ion binding"/>
    <property type="evidence" value="ECO:0007669"/>
    <property type="project" value="UniProtKB-KW"/>
</dbReference>
<dbReference type="GO" id="GO:0006360">
    <property type="term" value="P:transcription by RNA polymerase I"/>
    <property type="evidence" value="ECO:0000250"/>
    <property type="project" value="FlyBase"/>
</dbReference>
<dbReference type="CDD" id="cd00653">
    <property type="entry name" value="RNA_pol_B_RPB2"/>
    <property type="match status" value="1"/>
</dbReference>
<dbReference type="FunFam" id="2.40.270.10:FF:000011">
    <property type="entry name" value="DNA-directed RNA polymerase subunit beta"/>
    <property type="match status" value="1"/>
</dbReference>
<dbReference type="FunFam" id="3.90.1100.10:FF:000008">
    <property type="entry name" value="DNA-directed RNA polymerase subunit beta"/>
    <property type="match status" value="1"/>
</dbReference>
<dbReference type="FunFam" id="3.90.1100.10:FF:000016">
    <property type="entry name" value="DNA-directed RNA polymerase subunit beta"/>
    <property type="match status" value="1"/>
</dbReference>
<dbReference type="FunFam" id="3.90.1110.10:FF:000007">
    <property type="entry name" value="DNA-directed RNA polymerase subunit beta"/>
    <property type="match status" value="1"/>
</dbReference>
<dbReference type="FunFam" id="3.90.1800.10:FF:000004">
    <property type="entry name" value="DNA-directed RNA polymerase subunit beta"/>
    <property type="match status" value="1"/>
</dbReference>
<dbReference type="Gene3D" id="2.40.50.150">
    <property type="match status" value="1"/>
</dbReference>
<dbReference type="Gene3D" id="3.90.1100.10">
    <property type="match status" value="2"/>
</dbReference>
<dbReference type="Gene3D" id="2.40.270.10">
    <property type="entry name" value="DNA-directed RNA polymerase, subunit 2, domain 6"/>
    <property type="match status" value="1"/>
</dbReference>
<dbReference type="Gene3D" id="3.90.1800.10">
    <property type="entry name" value="RNA polymerase alpha subunit dimerisation domain"/>
    <property type="match status" value="1"/>
</dbReference>
<dbReference type="Gene3D" id="3.90.1110.10">
    <property type="entry name" value="RNA polymerase Rpb2, domain 2"/>
    <property type="match status" value="1"/>
</dbReference>
<dbReference type="InterPro" id="IPR015712">
    <property type="entry name" value="DNA-dir_RNA_pol_su2"/>
</dbReference>
<dbReference type="InterPro" id="IPR007120">
    <property type="entry name" value="DNA-dir_RNAP_su2_dom"/>
</dbReference>
<dbReference type="InterPro" id="IPR037033">
    <property type="entry name" value="DNA-dir_RNAP_su2_hyb_sf"/>
</dbReference>
<dbReference type="InterPro" id="IPR007121">
    <property type="entry name" value="RNA_pol_bsu_CS"/>
</dbReference>
<dbReference type="InterPro" id="IPR007644">
    <property type="entry name" value="RNA_pol_bsu_protrusion"/>
</dbReference>
<dbReference type="InterPro" id="IPR007642">
    <property type="entry name" value="RNA_pol_Rpb2_2"/>
</dbReference>
<dbReference type="InterPro" id="IPR037034">
    <property type="entry name" value="RNA_pol_Rpb2_2_sf"/>
</dbReference>
<dbReference type="InterPro" id="IPR007645">
    <property type="entry name" value="RNA_pol_Rpb2_3"/>
</dbReference>
<dbReference type="InterPro" id="IPR007641">
    <property type="entry name" value="RNA_pol_Rpb2_7"/>
</dbReference>
<dbReference type="InterPro" id="IPR014724">
    <property type="entry name" value="RNA_pol_RPB2_OB-fold"/>
</dbReference>
<dbReference type="InterPro" id="IPR009674">
    <property type="entry name" value="Rpa2_dom_4"/>
</dbReference>
<dbReference type="PANTHER" id="PTHR20856">
    <property type="entry name" value="DNA-DIRECTED RNA POLYMERASE I SUBUNIT 2"/>
    <property type="match status" value="1"/>
</dbReference>
<dbReference type="Pfam" id="PF06883">
    <property type="entry name" value="RNA_pol_Rpa2_4"/>
    <property type="match status" value="1"/>
</dbReference>
<dbReference type="Pfam" id="PF04563">
    <property type="entry name" value="RNA_pol_Rpb2_1"/>
    <property type="match status" value="1"/>
</dbReference>
<dbReference type="Pfam" id="PF04561">
    <property type="entry name" value="RNA_pol_Rpb2_2"/>
    <property type="match status" value="1"/>
</dbReference>
<dbReference type="Pfam" id="PF04565">
    <property type="entry name" value="RNA_pol_Rpb2_3"/>
    <property type="match status" value="1"/>
</dbReference>
<dbReference type="Pfam" id="PF00562">
    <property type="entry name" value="RNA_pol_Rpb2_6"/>
    <property type="match status" value="1"/>
</dbReference>
<dbReference type="Pfam" id="PF04560">
    <property type="entry name" value="RNA_pol_Rpb2_7"/>
    <property type="match status" value="1"/>
</dbReference>
<dbReference type="SUPFAM" id="SSF64484">
    <property type="entry name" value="beta and beta-prime subunits of DNA dependent RNA-polymerase"/>
    <property type="match status" value="1"/>
</dbReference>
<dbReference type="PROSITE" id="PS01166">
    <property type="entry name" value="RNA_POL_BETA"/>
    <property type="match status" value="1"/>
</dbReference>
<proteinExistence type="evidence at protein level"/>
<feature type="chain" id="PRO_0000048075" description="DNA-directed RNA polymerase I subunit RPA2">
    <location>
        <begin position="1"/>
        <end position="1129"/>
    </location>
</feature>
<feature type="zinc finger region" description="C4-type" evidence="1">
    <location>
        <begin position="1061"/>
        <end position="1093"/>
    </location>
</feature>
<feature type="sequence conflict" description="In Ref. 1; CAA35185." evidence="5" ref="1">
    <original>A</original>
    <variation>S</variation>
    <location>
        <position position="369"/>
    </location>
</feature>
<feature type="sequence conflict" description="In Ref. 1; CAA35185." evidence="5" ref="1">
    <original>M</original>
    <variation>L</variation>
    <location>
        <position position="617"/>
    </location>
</feature>
<feature type="sequence conflict" description="In Ref. 1; CAA35185." evidence="5" ref="1">
    <original>N</original>
    <variation>I</variation>
    <location>
        <position position="727"/>
    </location>
</feature>
<feature type="sequence conflict" description="In Ref. 1; CAA35185." evidence="5" ref="1">
    <original>K</original>
    <variation>T</variation>
    <location>
        <position position="855"/>
    </location>
</feature>
<gene>
    <name evidence="6" type="primary">Polr1B</name>
    <name evidence="3" type="synonym">RP135</name>
    <name evidence="4" type="synonym">RpI135</name>
    <name evidence="6" type="ORF">CG4033</name>
</gene>
<accession>P20028</accession>
<accession>Q9VPP3</accession>
<evidence type="ECO:0000250" key="1">
    <source>
        <dbReference type="UniProtKB" id="P22138"/>
    </source>
</evidence>
<evidence type="ECO:0000269" key="2">
    <source>
    </source>
</evidence>
<evidence type="ECO:0000303" key="3">
    <source>
    </source>
</evidence>
<evidence type="ECO:0000303" key="4">
    <source>
    </source>
</evidence>
<evidence type="ECO:0000305" key="5"/>
<evidence type="ECO:0000312" key="6">
    <source>
        <dbReference type="FlyBase" id="FBgn0003278"/>
    </source>
</evidence>
<name>RPA2_DROME</name>
<reference key="1">
    <citation type="journal article" date="1989" name="Mol. Gen. Genet.">
        <title>Primary structure and functional aspects of the gene coding for the second-largest subunit of RNA polymerase III of Drosophila.</title>
        <authorList>
            <person name="Kontermann R."/>
            <person name="Sitzler S."/>
            <person name="Seifarth W."/>
            <person name="Petersen G."/>
            <person name="Bautz E.K.F."/>
        </authorList>
    </citation>
    <scope>NUCLEOTIDE SEQUENCE [GENOMIC DNA]</scope>
</reference>
<reference key="2">
    <citation type="journal article" date="2000" name="Science">
        <title>The genome sequence of Drosophila melanogaster.</title>
        <authorList>
            <person name="Adams M.D."/>
            <person name="Celniker S.E."/>
            <person name="Holt R.A."/>
            <person name="Evans C.A."/>
            <person name="Gocayne J.D."/>
            <person name="Amanatides P.G."/>
            <person name="Scherer S.E."/>
            <person name="Li P.W."/>
            <person name="Hoskins R.A."/>
            <person name="Galle R.F."/>
            <person name="George R.A."/>
            <person name="Lewis S.E."/>
            <person name="Richards S."/>
            <person name="Ashburner M."/>
            <person name="Henderson S.N."/>
            <person name="Sutton G.G."/>
            <person name="Wortman J.R."/>
            <person name="Yandell M.D."/>
            <person name="Zhang Q."/>
            <person name="Chen L.X."/>
            <person name="Brandon R.C."/>
            <person name="Rogers Y.-H.C."/>
            <person name="Blazej R.G."/>
            <person name="Champe M."/>
            <person name="Pfeiffer B.D."/>
            <person name="Wan K.H."/>
            <person name="Doyle C."/>
            <person name="Baxter E.G."/>
            <person name="Helt G."/>
            <person name="Nelson C.R."/>
            <person name="Miklos G.L.G."/>
            <person name="Abril J.F."/>
            <person name="Agbayani A."/>
            <person name="An H.-J."/>
            <person name="Andrews-Pfannkoch C."/>
            <person name="Baldwin D."/>
            <person name="Ballew R.M."/>
            <person name="Basu A."/>
            <person name="Baxendale J."/>
            <person name="Bayraktaroglu L."/>
            <person name="Beasley E.M."/>
            <person name="Beeson K.Y."/>
            <person name="Benos P.V."/>
            <person name="Berman B.P."/>
            <person name="Bhandari D."/>
            <person name="Bolshakov S."/>
            <person name="Borkova D."/>
            <person name="Botchan M.R."/>
            <person name="Bouck J."/>
            <person name="Brokstein P."/>
            <person name="Brottier P."/>
            <person name="Burtis K.C."/>
            <person name="Busam D.A."/>
            <person name="Butler H."/>
            <person name="Cadieu E."/>
            <person name="Center A."/>
            <person name="Chandra I."/>
            <person name="Cherry J.M."/>
            <person name="Cawley S."/>
            <person name="Dahlke C."/>
            <person name="Davenport L.B."/>
            <person name="Davies P."/>
            <person name="de Pablos B."/>
            <person name="Delcher A."/>
            <person name="Deng Z."/>
            <person name="Mays A.D."/>
            <person name="Dew I."/>
            <person name="Dietz S.M."/>
            <person name="Dodson K."/>
            <person name="Doup L.E."/>
            <person name="Downes M."/>
            <person name="Dugan-Rocha S."/>
            <person name="Dunkov B.C."/>
            <person name="Dunn P."/>
            <person name="Durbin K.J."/>
            <person name="Evangelista C.C."/>
            <person name="Ferraz C."/>
            <person name="Ferriera S."/>
            <person name="Fleischmann W."/>
            <person name="Fosler C."/>
            <person name="Gabrielian A.E."/>
            <person name="Garg N.S."/>
            <person name="Gelbart W.M."/>
            <person name="Glasser K."/>
            <person name="Glodek A."/>
            <person name="Gong F."/>
            <person name="Gorrell J.H."/>
            <person name="Gu Z."/>
            <person name="Guan P."/>
            <person name="Harris M."/>
            <person name="Harris N.L."/>
            <person name="Harvey D.A."/>
            <person name="Heiman T.J."/>
            <person name="Hernandez J.R."/>
            <person name="Houck J."/>
            <person name="Hostin D."/>
            <person name="Houston K.A."/>
            <person name="Howland T.J."/>
            <person name="Wei M.-H."/>
            <person name="Ibegwam C."/>
            <person name="Jalali M."/>
            <person name="Kalush F."/>
            <person name="Karpen G.H."/>
            <person name="Ke Z."/>
            <person name="Kennison J.A."/>
            <person name="Ketchum K.A."/>
            <person name="Kimmel B.E."/>
            <person name="Kodira C.D."/>
            <person name="Kraft C.L."/>
            <person name="Kravitz S."/>
            <person name="Kulp D."/>
            <person name="Lai Z."/>
            <person name="Lasko P."/>
            <person name="Lei Y."/>
            <person name="Levitsky A.A."/>
            <person name="Li J.H."/>
            <person name="Li Z."/>
            <person name="Liang Y."/>
            <person name="Lin X."/>
            <person name="Liu X."/>
            <person name="Mattei B."/>
            <person name="McIntosh T.C."/>
            <person name="McLeod M.P."/>
            <person name="McPherson D."/>
            <person name="Merkulov G."/>
            <person name="Milshina N.V."/>
            <person name="Mobarry C."/>
            <person name="Morris J."/>
            <person name="Moshrefi A."/>
            <person name="Mount S.M."/>
            <person name="Moy M."/>
            <person name="Murphy B."/>
            <person name="Murphy L."/>
            <person name="Muzny D.M."/>
            <person name="Nelson D.L."/>
            <person name="Nelson D.R."/>
            <person name="Nelson K.A."/>
            <person name="Nixon K."/>
            <person name="Nusskern D.R."/>
            <person name="Pacleb J.M."/>
            <person name="Palazzolo M."/>
            <person name="Pittman G.S."/>
            <person name="Pan S."/>
            <person name="Pollard J."/>
            <person name="Puri V."/>
            <person name="Reese M.G."/>
            <person name="Reinert K."/>
            <person name="Remington K."/>
            <person name="Saunders R.D.C."/>
            <person name="Scheeler F."/>
            <person name="Shen H."/>
            <person name="Shue B.C."/>
            <person name="Siden-Kiamos I."/>
            <person name="Simpson M."/>
            <person name="Skupski M.P."/>
            <person name="Smith T.J."/>
            <person name="Spier E."/>
            <person name="Spradling A.C."/>
            <person name="Stapleton M."/>
            <person name="Strong R."/>
            <person name="Sun E."/>
            <person name="Svirskas R."/>
            <person name="Tector C."/>
            <person name="Turner R."/>
            <person name="Venter E."/>
            <person name="Wang A.H."/>
            <person name="Wang X."/>
            <person name="Wang Z.-Y."/>
            <person name="Wassarman D.A."/>
            <person name="Weinstock G.M."/>
            <person name="Weissenbach J."/>
            <person name="Williams S.M."/>
            <person name="Woodage T."/>
            <person name="Worley K.C."/>
            <person name="Wu D."/>
            <person name="Yang S."/>
            <person name="Yao Q.A."/>
            <person name="Ye J."/>
            <person name="Yeh R.-F."/>
            <person name="Zaveri J.S."/>
            <person name="Zhan M."/>
            <person name="Zhang G."/>
            <person name="Zhao Q."/>
            <person name="Zheng L."/>
            <person name="Zheng X.H."/>
            <person name="Zhong F.N."/>
            <person name="Zhong W."/>
            <person name="Zhou X."/>
            <person name="Zhu S.C."/>
            <person name="Zhu X."/>
            <person name="Smith H.O."/>
            <person name="Gibbs R.A."/>
            <person name="Myers E.W."/>
            <person name="Rubin G.M."/>
            <person name="Venter J.C."/>
        </authorList>
    </citation>
    <scope>NUCLEOTIDE SEQUENCE [LARGE SCALE GENOMIC DNA]</scope>
    <source>
        <strain>Berkeley</strain>
    </source>
</reference>
<reference key="3">
    <citation type="journal article" date="2002" name="Genome Biol.">
        <title>Annotation of the Drosophila melanogaster euchromatic genome: a systematic review.</title>
        <authorList>
            <person name="Misra S."/>
            <person name="Crosby M.A."/>
            <person name="Mungall C.J."/>
            <person name="Matthews B.B."/>
            <person name="Campbell K.S."/>
            <person name="Hradecky P."/>
            <person name="Huang Y."/>
            <person name="Kaminker J.S."/>
            <person name="Millburn G.H."/>
            <person name="Prochnik S.E."/>
            <person name="Smith C.D."/>
            <person name="Tupy J.L."/>
            <person name="Whitfield E.J."/>
            <person name="Bayraktaroglu L."/>
            <person name="Berman B.P."/>
            <person name="Bettencourt B.R."/>
            <person name="Celniker S.E."/>
            <person name="de Grey A.D.N.J."/>
            <person name="Drysdale R.A."/>
            <person name="Harris N.L."/>
            <person name="Richter J."/>
            <person name="Russo S."/>
            <person name="Schroeder A.J."/>
            <person name="Shu S.Q."/>
            <person name="Stapleton M."/>
            <person name="Yamada C."/>
            <person name="Ashburner M."/>
            <person name="Gelbart W.M."/>
            <person name="Rubin G.M."/>
            <person name="Lewis S.E."/>
        </authorList>
    </citation>
    <scope>GENOME REANNOTATION</scope>
    <source>
        <strain>Berkeley</strain>
    </source>
</reference>
<reference key="4">
    <citation type="journal article" date="2002" name="Genome Biol.">
        <title>A Drosophila full-length cDNA resource.</title>
        <authorList>
            <person name="Stapleton M."/>
            <person name="Carlson J.W."/>
            <person name="Brokstein P."/>
            <person name="Yu C."/>
            <person name="Champe M."/>
            <person name="George R.A."/>
            <person name="Guarin H."/>
            <person name="Kronmiller B."/>
            <person name="Pacleb J.M."/>
            <person name="Park S."/>
            <person name="Wan K.H."/>
            <person name="Rubin G.M."/>
            <person name="Celniker S.E."/>
        </authorList>
    </citation>
    <scope>NUCLEOTIDE SEQUENCE [LARGE SCALE MRNA]</scope>
    <source>
        <strain>Berkeley</strain>
        <tissue>Embryo</tissue>
    </source>
</reference>
<reference key="5">
    <citation type="journal article" date="2015" name="J. Biol. Chem.">
        <title>Drosophila Low Temperature Viability Protein 1 (LTV1) Is Required for Ribosome Biogenesis and Cell Growth Downstream of Drosophila Myc (dMyc).</title>
        <authorList>
            <person name="Kim W."/>
            <person name="Kim H.D."/>
            <person name="Jung Y."/>
            <person name="Kim J."/>
            <person name="Chung J."/>
        </authorList>
    </citation>
    <scope>DISRUPTION PHENOTYPE</scope>
</reference>
<comment type="function">
    <text evidence="1">DNA-dependent RNA polymerase catalyzes the transcription of DNA into RNA using the four ribonucleoside triphosphates as substrates. Second largest core component of RNA polymerase I which synthesizes ribosomal RNA precursors. Proposed to contribute to the polymerase catalytic activity and forms the polymerase active center together with the largest subunit. Pol I is composed of mobile elements and RPA2 is part of the core element with the central large cleft and probably a clamp element that moves to open and close the cleft (By similarity).</text>
</comment>
<comment type="catalytic activity">
    <reaction evidence="1">
        <text>RNA(n) + a ribonucleoside 5'-triphosphate = RNA(n+1) + diphosphate</text>
        <dbReference type="Rhea" id="RHEA:21248"/>
        <dbReference type="Rhea" id="RHEA-COMP:14527"/>
        <dbReference type="Rhea" id="RHEA-COMP:17342"/>
        <dbReference type="ChEBI" id="CHEBI:33019"/>
        <dbReference type="ChEBI" id="CHEBI:61557"/>
        <dbReference type="ChEBI" id="CHEBI:140395"/>
        <dbReference type="EC" id="2.7.7.6"/>
    </reaction>
    <physiologicalReaction direction="left-to-right" evidence="1">
        <dbReference type="Rhea" id="RHEA:21249"/>
    </physiologicalReaction>
</comment>
<comment type="subunit">
    <text evidence="1">Component of the RNA polymerase I (Pol I) complex consisting of at least 13 subunits.</text>
</comment>
<comment type="interaction">
    <interactant intactId="EBI-3403932">
        <id>P20028</id>
    </interactant>
    <interactant intactId="EBI-104191">
        <id>Q9VH20</id>
        <label>TAF1B</label>
    </interactant>
    <organismsDiffer>false</organismsDiffer>
    <experiments>4</experiments>
</comment>
<comment type="interaction">
    <interactant intactId="EBI-3403932">
        <id>P20028</id>
    </interactant>
    <interactant intactId="EBI-126425">
        <id>A1Z7A5</id>
        <label>udd</label>
    </interactant>
    <organismsDiffer>false</organismsDiffer>
    <experiments>4</experiments>
</comment>
<comment type="subcellular location">
    <subcellularLocation>
        <location evidence="1">Nucleus</location>
        <location evidence="1">Nucleolus</location>
    </subcellularLocation>
</comment>
<comment type="disruption phenotype">
    <text evidence="2">RNAi-mediated knockdown results in decreased cell size likely as a result of its role in the synthesis of ribosomal RNA precursors.</text>
</comment>
<comment type="similarity">
    <text evidence="5">Belongs to the RNA polymerase beta chain family.</text>
</comment>
<sequence>MLEEMQQMKTIPVLTNSRPEFKQIPKKLSRHLANLGGPHVDSFDEMLTVGLDNSAKHMIPNHWLSPAGEKISMKVESIWIAKPKVPQDVIDVRTREIYPTDSRQLHVSYSGMCSVRLGWSVNGVQKTPINMDLGEVPIMLRSKACNLGQATPEEMVKHGEHDSEWGGIFVIRGNEKIVRMLIMTRRNHPICVKRSSWKDRGQNFSDLGMLVQTVREDESSLSNVVHYLNNGTAKFMFSHVKRLSYVPVCLILKCLMDYTDEEIYNRLVQGYESDQYYVSCVQAMLREVQNENVYTHAQCKSFIGNLFRARFPEVPEWQPDDDVTDFILRERVMIHLDTYEDKFQLIVFMIQKLFQCAQGKYKVENVDSAMMQEVLLPGHLYQKYLSERVESWVSQVRRCLQKKLTSPDALVTSAVMTQCMRQAGGVGRAIESFLATGNIASRTGLGLMQNSGLVIMAENINRMRYMSHFRAIHRGSYFTTMRTTEARQLLPDAWGFICPVHTPDGTPCGLLNHLTLTCEISMRPDPKLVKAIPKHLIDMGMMPLSNRRYLGEKLYVVFLDGKHLGHIHQSEAEKIVDELRYGKIFGTLPQMMEIGFIPFKKNGQFPGLYIATGPARMMRPVWNLKWKRVEYIGTLEQLYMEIAIDAKEMYPDFTTHLELAKTHFMSNLANLIPMPDYNQSPRNMYQCQMGKQTMGTPCLNWPKQAANKLYRLQTPGTPLFRPVHYDNIQLDDFAMGTNAIVAVISYTGYDMEDAMIINKAAYERGFAYGSIYKTKFLTLDKKSSYFARHPHMPELIKHLDTDGLPHPGSKLSYGSPLYCYFDGEVATYKVVKMDEKEDCIVESIRQLGSFDLSPKKMVAITLRVPRPATIGDKFASRAGQKGICSQKYPAEDLPFTESGLIPDIVFNPHGFPSRMTIAMMIETMAGKGAAIHGNVYDATPFRFSEENTAIDYFGKMLEAGGYNYYGTERLYSGVDGREMTADIFFGVVHYQRLRHMVFDKWQVRSTGAVEARTHQPIKGRKRGGGVRFGEMERDALISHGAAFLLQDRLFHNSDKTHTLVCHKCGSILAPLQRIVKRNETGGLSSQPDTCRLCGDNSSVSMIEIPFSFKYLVTELSSVNINARFKLNEI</sequence>